<feature type="chain" id="PRO_0000343236" description="NAD(P)H-quinone oxidoreductase chain 4">
    <location>
        <begin position="1"/>
        <end position="534"/>
    </location>
</feature>
<feature type="transmembrane region" description="Helical" evidence="1">
    <location>
        <begin position="12"/>
        <end position="32"/>
    </location>
</feature>
<feature type="transmembrane region" description="Helical" evidence="1">
    <location>
        <begin position="44"/>
        <end position="64"/>
    </location>
</feature>
<feature type="transmembrane region" description="Helical" evidence="1">
    <location>
        <begin position="96"/>
        <end position="116"/>
    </location>
</feature>
<feature type="transmembrane region" description="Helical" evidence="1">
    <location>
        <begin position="120"/>
        <end position="140"/>
    </location>
</feature>
<feature type="transmembrane region" description="Helical" evidence="1">
    <location>
        <begin position="144"/>
        <end position="164"/>
    </location>
</feature>
<feature type="transmembrane region" description="Helical" evidence="1">
    <location>
        <begin position="176"/>
        <end position="196"/>
    </location>
</feature>
<feature type="transmembrane region" description="Helical" evidence="1">
    <location>
        <begin position="220"/>
        <end position="240"/>
    </location>
</feature>
<feature type="transmembrane region" description="Helical" evidence="1">
    <location>
        <begin position="251"/>
        <end position="271"/>
    </location>
</feature>
<feature type="transmembrane region" description="Helical" evidence="1">
    <location>
        <begin position="285"/>
        <end position="305"/>
    </location>
</feature>
<feature type="transmembrane region" description="Helical" evidence="1">
    <location>
        <begin position="314"/>
        <end position="334"/>
    </location>
</feature>
<feature type="transmembrane region" description="Helical" evidence="1">
    <location>
        <begin position="340"/>
        <end position="360"/>
    </location>
</feature>
<feature type="transmembrane region" description="Helical" evidence="1">
    <location>
        <begin position="384"/>
        <end position="404"/>
    </location>
</feature>
<feature type="transmembrane region" description="Helical" evidence="1">
    <location>
        <begin position="425"/>
        <end position="445"/>
    </location>
</feature>
<feature type="transmembrane region" description="Helical" evidence="1">
    <location>
        <begin position="472"/>
        <end position="492"/>
    </location>
</feature>
<accession>A8G2F5</accession>
<dbReference type="EC" id="7.1.1.-" evidence="1"/>
<dbReference type="EMBL" id="CP000825">
    <property type="protein sequence ID" value="ABV49786.1"/>
    <property type="molecule type" value="Genomic_DNA"/>
</dbReference>
<dbReference type="RefSeq" id="WP_012006962.1">
    <property type="nucleotide sequence ID" value="NC_009840.1"/>
</dbReference>
<dbReference type="SMR" id="A8G2F5"/>
<dbReference type="STRING" id="93060.P9215_01671"/>
<dbReference type="KEGG" id="pmh:P9215_01671"/>
<dbReference type="eggNOG" id="COG1008">
    <property type="taxonomic scope" value="Bacteria"/>
</dbReference>
<dbReference type="HOGENOM" id="CLU_007100_4_0_3"/>
<dbReference type="OrthoDB" id="9811718at2"/>
<dbReference type="Proteomes" id="UP000002014">
    <property type="component" value="Chromosome"/>
</dbReference>
<dbReference type="GO" id="GO:0031676">
    <property type="term" value="C:plasma membrane-derived thylakoid membrane"/>
    <property type="evidence" value="ECO:0007669"/>
    <property type="project" value="UniProtKB-SubCell"/>
</dbReference>
<dbReference type="GO" id="GO:0008137">
    <property type="term" value="F:NADH dehydrogenase (ubiquinone) activity"/>
    <property type="evidence" value="ECO:0007669"/>
    <property type="project" value="InterPro"/>
</dbReference>
<dbReference type="GO" id="GO:0048039">
    <property type="term" value="F:ubiquinone binding"/>
    <property type="evidence" value="ECO:0007669"/>
    <property type="project" value="TreeGrafter"/>
</dbReference>
<dbReference type="GO" id="GO:0042773">
    <property type="term" value="P:ATP synthesis coupled electron transport"/>
    <property type="evidence" value="ECO:0007669"/>
    <property type="project" value="InterPro"/>
</dbReference>
<dbReference type="GO" id="GO:0015990">
    <property type="term" value="P:electron transport coupled proton transport"/>
    <property type="evidence" value="ECO:0007669"/>
    <property type="project" value="TreeGrafter"/>
</dbReference>
<dbReference type="HAMAP" id="MF_00491">
    <property type="entry name" value="NDH1_NuoM"/>
    <property type="match status" value="1"/>
</dbReference>
<dbReference type="InterPro" id="IPR022997">
    <property type="entry name" value="NADH_Q_OxRdtase_chain4"/>
</dbReference>
<dbReference type="InterPro" id="IPR010227">
    <property type="entry name" value="NADH_Q_OxRdtase_chainM/4"/>
</dbReference>
<dbReference type="InterPro" id="IPR003918">
    <property type="entry name" value="NADH_UbQ_OxRdtase"/>
</dbReference>
<dbReference type="InterPro" id="IPR001750">
    <property type="entry name" value="ND/Mrp_TM"/>
</dbReference>
<dbReference type="NCBIfam" id="TIGR01972">
    <property type="entry name" value="NDH_I_M"/>
    <property type="match status" value="1"/>
</dbReference>
<dbReference type="NCBIfam" id="NF002713">
    <property type="entry name" value="PRK02546.1"/>
    <property type="match status" value="1"/>
</dbReference>
<dbReference type="NCBIfam" id="NF009212">
    <property type="entry name" value="PRK12561.1"/>
    <property type="match status" value="1"/>
</dbReference>
<dbReference type="PANTHER" id="PTHR43507:SF21">
    <property type="entry name" value="NAD(P)H-QUINONE OXIDOREDUCTASE CHAIN 4, CHLOROPLASTIC"/>
    <property type="match status" value="1"/>
</dbReference>
<dbReference type="PANTHER" id="PTHR43507">
    <property type="entry name" value="NADH-UBIQUINONE OXIDOREDUCTASE CHAIN 4"/>
    <property type="match status" value="1"/>
</dbReference>
<dbReference type="Pfam" id="PF00361">
    <property type="entry name" value="Proton_antipo_M"/>
    <property type="match status" value="1"/>
</dbReference>
<dbReference type="PRINTS" id="PR01437">
    <property type="entry name" value="NUOXDRDTASE4"/>
</dbReference>
<proteinExistence type="inferred from homology"/>
<organism>
    <name type="scientific">Prochlorococcus marinus (strain MIT 9215)</name>
    <dbReference type="NCBI Taxonomy" id="93060"/>
    <lineage>
        <taxon>Bacteria</taxon>
        <taxon>Bacillati</taxon>
        <taxon>Cyanobacteriota</taxon>
        <taxon>Cyanophyceae</taxon>
        <taxon>Synechococcales</taxon>
        <taxon>Prochlorococcaceae</taxon>
        <taxon>Prochlorococcus</taxon>
    </lineage>
</organism>
<evidence type="ECO:0000255" key="1">
    <source>
        <dbReference type="HAMAP-Rule" id="MF_00491"/>
    </source>
</evidence>
<protein>
    <recommendedName>
        <fullName evidence="1">NAD(P)H-quinone oxidoreductase chain 4</fullName>
        <ecNumber evidence="1">7.1.1.-</ecNumber>
    </recommendedName>
    <alternativeName>
        <fullName evidence="1">NAD(P)H dehydrogenase I, chain 4</fullName>
    </alternativeName>
    <alternativeName>
        <fullName evidence="1">NDH-1, chain 4</fullName>
    </alternativeName>
</protein>
<sequence length="534" mass="58416">MFGTLGAGLSNFPWLSASILFPIGSALVIPFFPDKGDGKEVRWFALSIALITFLITVGSYINGFDINNENVQLKENISWLPDLGLTWSVGADGMSMPLILLTSFITALAVLAAWPVKFKPKLFFFLILVMDGGQIAVFAVQDMLLFFLTWELELIPVYLLLAIWGGKNRQYAATKFIIYTAGSSIFILLAALAMGFYGTEIPNFEFSHLAAQDFSQKFQILCYVGLLIAFGVKLPIVPLHTWLPDAHGEATAPVHMLLAGILLKMGGYALLRFNAQLLPVAHAQFAPLLIVLGVVNIIYAALTSFAQRNLKRKIAYSSISHMGFVLIGIGSFSSLGTSGAMLQMVSHGLIGASLFFLVGATYDRTKTLKLDEMSGVGQKMRIMFALWTACSLASLALPGMSGFVSELMVFTGFVTDEVYTLPFRVVMASLAAIGVILTPIYLLSMLREIFFGKENPKLIEERKLIDAEPREVYIIACLLLPIIGIGLYPRLVTESYIASINNLVDRDLTAVKSAVKTNIFSGTKKNEILKAPTI</sequence>
<name>NU4C_PROM2</name>
<reference key="1">
    <citation type="journal article" date="2007" name="PLoS Genet.">
        <title>Patterns and implications of gene gain and loss in the evolution of Prochlorococcus.</title>
        <authorList>
            <person name="Kettler G.C."/>
            <person name="Martiny A.C."/>
            <person name="Huang K."/>
            <person name="Zucker J."/>
            <person name="Coleman M.L."/>
            <person name="Rodrigue S."/>
            <person name="Chen F."/>
            <person name="Lapidus A."/>
            <person name="Ferriera S."/>
            <person name="Johnson J."/>
            <person name="Steglich C."/>
            <person name="Church G.M."/>
            <person name="Richardson P."/>
            <person name="Chisholm S.W."/>
        </authorList>
    </citation>
    <scope>NUCLEOTIDE SEQUENCE [LARGE SCALE GENOMIC DNA]</scope>
    <source>
        <strain>MIT 9215</strain>
    </source>
</reference>
<keyword id="KW-0472">Membrane</keyword>
<keyword id="KW-0520">NAD</keyword>
<keyword id="KW-0521">NADP</keyword>
<keyword id="KW-0618">Plastoquinone</keyword>
<keyword id="KW-0874">Quinone</keyword>
<keyword id="KW-0793">Thylakoid</keyword>
<keyword id="KW-1278">Translocase</keyword>
<keyword id="KW-0812">Transmembrane</keyword>
<keyword id="KW-1133">Transmembrane helix</keyword>
<comment type="function">
    <text evidence="1">NDH-1 shuttles electrons from NAD(P)H, via FMN and iron-sulfur (Fe-S) centers, to quinones in the respiratory chain. The immediate electron acceptor for the enzyme in this species is believed to be plastoquinone. Couples the redox reaction to proton translocation (for every two electrons transferred, four hydrogen ions are translocated across the cytoplasmic membrane), and thus conserves the redox energy in a proton gradient.</text>
</comment>
<comment type="catalytic activity">
    <reaction evidence="1">
        <text>a plastoquinone + NADH + (n+1) H(+)(in) = a plastoquinol + NAD(+) + n H(+)(out)</text>
        <dbReference type="Rhea" id="RHEA:42608"/>
        <dbReference type="Rhea" id="RHEA-COMP:9561"/>
        <dbReference type="Rhea" id="RHEA-COMP:9562"/>
        <dbReference type="ChEBI" id="CHEBI:15378"/>
        <dbReference type="ChEBI" id="CHEBI:17757"/>
        <dbReference type="ChEBI" id="CHEBI:57540"/>
        <dbReference type="ChEBI" id="CHEBI:57945"/>
        <dbReference type="ChEBI" id="CHEBI:62192"/>
    </reaction>
</comment>
<comment type="catalytic activity">
    <reaction evidence="1">
        <text>a plastoquinone + NADPH + (n+1) H(+)(in) = a plastoquinol + NADP(+) + n H(+)(out)</text>
        <dbReference type="Rhea" id="RHEA:42612"/>
        <dbReference type="Rhea" id="RHEA-COMP:9561"/>
        <dbReference type="Rhea" id="RHEA-COMP:9562"/>
        <dbReference type="ChEBI" id="CHEBI:15378"/>
        <dbReference type="ChEBI" id="CHEBI:17757"/>
        <dbReference type="ChEBI" id="CHEBI:57783"/>
        <dbReference type="ChEBI" id="CHEBI:58349"/>
        <dbReference type="ChEBI" id="CHEBI:62192"/>
    </reaction>
</comment>
<comment type="subcellular location">
    <subcellularLocation>
        <location evidence="1">Cellular thylakoid membrane</location>
        <topology evidence="1">Multi-pass membrane protein</topology>
    </subcellularLocation>
</comment>
<comment type="similarity">
    <text evidence="1">Belongs to the complex I subunit 4 family.</text>
</comment>
<gene>
    <name evidence="1" type="primary">ndhD</name>
    <name type="ordered locus">P9215_01671</name>
</gene>